<evidence type="ECO:0000255" key="1">
    <source>
        <dbReference type="HAMAP-Rule" id="MF_00051"/>
    </source>
</evidence>
<dbReference type="EC" id="2.1.2.1" evidence="1"/>
<dbReference type="EMBL" id="CP000489">
    <property type="protein sequence ID" value="ABL69031.1"/>
    <property type="molecule type" value="Genomic_DNA"/>
</dbReference>
<dbReference type="RefSeq" id="WP_011747259.1">
    <property type="nucleotide sequence ID" value="NC_008686.1"/>
</dbReference>
<dbReference type="SMR" id="A1B0I7"/>
<dbReference type="STRING" id="318586.Pden_0920"/>
<dbReference type="EnsemblBacteria" id="ABL69031">
    <property type="protein sequence ID" value="ABL69031"/>
    <property type="gene ID" value="Pden_0920"/>
</dbReference>
<dbReference type="GeneID" id="93452143"/>
<dbReference type="KEGG" id="pde:Pden_0920"/>
<dbReference type="eggNOG" id="COG0112">
    <property type="taxonomic scope" value="Bacteria"/>
</dbReference>
<dbReference type="HOGENOM" id="CLU_022477_2_1_5"/>
<dbReference type="OrthoDB" id="9803846at2"/>
<dbReference type="UniPathway" id="UPA00193"/>
<dbReference type="UniPathway" id="UPA00288">
    <property type="reaction ID" value="UER01023"/>
</dbReference>
<dbReference type="Proteomes" id="UP000000361">
    <property type="component" value="Chromosome 1"/>
</dbReference>
<dbReference type="GO" id="GO:0005829">
    <property type="term" value="C:cytosol"/>
    <property type="evidence" value="ECO:0007669"/>
    <property type="project" value="TreeGrafter"/>
</dbReference>
<dbReference type="GO" id="GO:0004372">
    <property type="term" value="F:glycine hydroxymethyltransferase activity"/>
    <property type="evidence" value="ECO:0007669"/>
    <property type="project" value="UniProtKB-UniRule"/>
</dbReference>
<dbReference type="GO" id="GO:0030170">
    <property type="term" value="F:pyridoxal phosphate binding"/>
    <property type="evidence" value="ECO:0007669"/>
    <property type="project" value="UniProtKB-UniRule"/>
</dbReference>
<dbReference type="GO" id="GO:0019264">
    <property type="term" value="P:glycine biosynthetic process from serine"/>
    <property type="evidence" value="ECO:0007669"/>
    <property type="project" value="UniProtKB-UniRule"/>
</dbReference>
<dbReference type="GO" id="GO:0035999">
    <property type="term" value="P:tetrahydrofolate interconversion"/>
    <property type="evidence" value="ECO:0007669"/>
    <property type="project" value="UniProtKB-UniRule"/>
</dbReference>
<dbReference type="CDD" id="cd00378">
    <property type="entry name" value="SHMT"/>
    <property type="match status" value="1"/>
</dbReference>
<dbReference type="FunFam" id="3.40.640.10:FF:000001">
    <property type="entry name" value="Serine hydroxymethyltransferase"/>
    <property type="match status" value="1"/>
</dbReference>
<dbReference type="FunFam" id="3.90.1150.10:FF:000003">
    <property type="entry name" value="Serine hydroxymethyltransferase"/>
    <property type="match status" value="1"/>
</dbReference>
<dbReference type="Gene3D" id="3.90.1150.10">
    <property type="entry name" value="Aspartate Aminotransferase, domain 1"/>
    <property type="match status" value="1"/>
</dbReference>
<dbReference type="Gene3D" id="3.40.640.10">
    <property type="entry name" value="Type I PLP-dependent aspartate aminotransferase-like (Major domain)"/>
    <property type="match status" value="1"/>
</dbReference>
<dbReference type="HAMAP" id="MF_00051">
    <property type="entry name" value="SHMT"/>
    <property type="match status" value="1"/>
</dbReference>
<dbReference type="InterPro" id="IPR015424">
    <property type="entry name" value="PyrdxlP-dep_Trfase"/>
</dbReference>
<dbReference type="InterPro" id="IPR015421">
    <property type="entry name" value="PyrdxlP-dep_Trfase_major"/>
</dbReference>
<dbReference type="InterPro" id="IPR015422">
    <property type="entry name" value="PyrdxlP-dep_Trfase_small"/>
</dbReference>
<dbReference type="InterPro" id="IPR001085">
    <property type="entry name" value="Ser_HO-MeTrfase"/>
</dbReference>
<dbReference type="InterPro" id="IPR049943">
    <property type="entry name" value="Ser_HO-MeTrfase-like"/>
</dbReference>
<dbReference type="InterPro" id="IPR019798">
    <property type="entry name" value="Ser_HO-MeTrfase_PLP_BS"/>
</dbReference>
<dbReference type="InterPro" id="IPR039429">
    <property type="entry name" value="SHMT-like_dom"/>
</dbReference>
<dbReference type="NCBIfam" id="NF000586">
    <property type="entry name" value="PRK00011.1"/>
    <property type="match status" value="1"/>
</dbReference>
<dbReference type="PANTHER" id="PTHR11680">
    <property type="entry name" value="SERINE HYDROXYMETHYLTRANSFERASE"/>
    <property type="match status" value="1"/>
</dbReference>
<dbReference type="PANTHER" id="PTHR11680:SF35">
    <property type="entry name" value="SERINE HYDROXYMETHYLTRANSFERASE 1"/>
    <property type="match status" value="1"/>
</dbReference>
<dbReference type="Pfam" id="PF00464">
    <property type="entry name" value="SHMT"/>
    <property type="match status" value="1"/>
</dbReference>
<dbReference type="PIRSF" id="PIRSF000412">
    <property type="entry name" value="SHMT"/>
    <property type="match status" value="1"/>
</dbReference>
<dbReference type="SUPFAM" id="SSF53383">
    <property type="entry name" value="PLP-dependent transferases"/>
    <property type="match status" value="1"/>
</dbReference>
<dbReference type="PROSITE" id="PS00096">
    <property type="entry name" value="SHMT"/>
    <property type="match status" value="1"/>
</dbReference>
<gene>
    <name evidence="1" type="primary">glyA</name>
    <name type="ordered locus">Pden_0920</name>
</gene>
<accession>A1B0I7</accession>
<name>GLYA_PARDP</name>
<reference key="1">
    <citation type="submission" date="2006-12" db="EMBL/GenBank/DDBJ databases">
        <title>Complete sequence of chromosome 1 of Paracoccus denitrificans PD1222.</title>
        <authorList>
            <person name="Copeland A."/>
            <person name="Lucas S."/>
            <person name="Lapidus A."/>
            <person name="Barry K."/>
            <person name="Detter J.C."/>
            <person name="Glavina del Rio T."/>
            <person name="Hammon N."/>
            <person name="Israni S."/>
            <person name="Dalin E."/>
            <person name="Tice H."/>
            <person name="Pitluck S."/>
            <person name="Munk A.C."/>
            <person name="Brettin T."/>
            <person name="Bruce D."/>
            <person name="Han C."/>
            <person name="Tapia R."/>
            <person name="Gilna P."/>
            <person name="Schmutz J."/>
            <person name="Larimer F."/>
            <person name="Land M."/>
            <person name="Hauser L."/>
            <person name="Kyrpides N."/>
            <person name="Lykidis A."/>
            <person name="Spiro S."/>
            <person name="Richardson D.J."/>
            <person name="Moir J.W.B."/>
            <person name="Ferguson S.J."/>
            <person name="van Spanning R.J.M."/>
            <person name="Richardson P."/>
        </authorList>
    </citation>
    <scope>NUCLEOTIDE SEQUENCE [LARGE SCALE GENOMIC DNA]</scope>
    <source>
        <strain>Pd 1222</strain>
    </source>
</reference>
<sequence length="427" mass="46130">MTDTGFFTETLDSRDPDIFGAIRKELGRQRDEIELIASENIVSRAVLEAQGSVLTNKYAEGYPGKRYYGGCQYVDIVEELAIERAKQLFGCEFANVQPNSGSQMNQAVFLALLQPGDTFMGLDLNSGGHLTHGSPVNMSGKWFNVVSYGVRQQDQLLDMDEIRKKAHEHKPKLILAGGTAYSRVWDWAEFRKIADEVGAWLMVDMAHIAGLVAGGQHPSPLPNAHVVTTTTHKSLRGPRGGMVLTNDADIAKKINSAVFPGLQGGPLMHVIAAKAVAFGEALRPDFKDYAAQVVANARAMADELMKGGIDIVSGGTDNHLCLADLRPKGVTGKATEAALGRAHITCNKNGVPFDPEKPFVTSGIRLGAPAGTTRGFKEDEFRQIARWIVEVVDGLAANGEEGNAEVEARVKAEVEALCARFPLYNGL</sequence>
<keyword id="KW-0028">Amino-acid biosynthesis</keyword>
<keyword id="KW-0963">Cytoplasm</keyword>
<keyword id="KW-0554">One-carbon metabolism</keyword>
<keyword id="KW-0663">Pyridoxal phosphate</keyword>
<keyword id="KW-1185">Reference proteome</keyword>
<keyword id="KW-0808">Transferase</keyword>
<comment type="function">
    <text evidence="1">Catalyzes the reversible interconversion of serine and glycine with tetrahydrofolate (THF) serving as the one-carbon carrier. This reaction serves as the major source of one-carbon groups required for the biosynthesis of purines, thymidylate, methionine, and other important biomolecules. Also exhibits THF-independent aldolase activity toward beta-hydroxyamino acids, producing glycine and aldehydes, via a retro-aldol mechanism.</text>
</comment>
<comment type="catalytic activity">
    <reaction evidence="1">
        <text>(6R)-5,10-methylene-5,6,7,8-tetrahydrofolate + glycine + H2O = (6S)-5,6,7,8-tetrahydrofolate + L-serine</text>
        <dbReference type="Rhea" id="RHEA:15481"/>
        <dbReference type="ChEBI" id="CHEBI:15377"/>
        <dbReference type="ChEBI" id="CHEBI:15636"/>
        <dbReference type="ChEBI" id="CHEBI:33384"/>
        <dbReference type="ChEBI" id="CHEBI:57305"/>
        <dbReference type="ChEBI" id="CHEBI:57453"/>
        <dbReference type="EC" id="2.1.2.1"/>
    </reaction>
</comment>
<comment type="cofactor">
    <cofactor evidence="1">
        <name>pyridoxal 5'-phosphate</name>
        <dbReference type="ChEBI" id="CHEBI:597326"/>
    </cofactor>
</comment>
<comment type="pathway">
    <text evidence="1">One-carbon metabolism; tetrahydrofolate interconversion.</text>
</comment>
<comment type="pathway">
    <text evidence="1">Amino-acid biosynthesis; glycine biosynthesis; glycine from L-serine: step 1/1.</text>
</comment>
<comment type="subunit">
    <text evidence="1">Homodimer.</text>
</comment>
<comment type="subcellular location">
    <subcellularLocation>
        <location evidence="1">Cytoplasm</location>
    </subcellularLocation>
</comment>
<comment type="similarity">
    <text evidence="1">Belongs to the SHMT family.</text>
</comment>
<feature type="chain" id="PRO_0000369945" description="Serine hydroxymethyltransferase">
    <location>
        <begin position="1"/>
        <end position="427"/>
    </location>
</feature>
<feature type="binding site" evidence="1">
    <location>
        <position position="124"/>
    </location>
    <ligand>
        <name>(6S)-5,6,7,8-tetrahydrofolate</name>
        <dbReference type="ChEBI" id="CHEBI:57453"/>
    </ligand>
</feature>
<feature type="binding site" evidence="1">
    <location>
        <begin position="128"/>
        <end position="130"/>
    </location>
    <ligand>
        <name>(6S)-5,6,7,8-tetrahydrofolate</name>
        <dbReference type="ChEBI" id="CHEBI:57453"/>
    </ligand>
</feature>
<feature type="site" description="Plays an important role in substrate specificity" evidence="1">
    <location>
        <position position="232"/>
    </location>
</feature>
<feature type="modified residue" description="N6-(pyridoxal phosphate)lysine" evidence="1">
    <location>
        <position position="233"/>
    </location>
</feature>
<organism>
    <name type="scientific">Paracoccus denitrificans (strain Pd 1222)</name>
    <dbReference type="NCBI Taxonomy" id="318586"/>
    <lineage>
        <taxon>Bacteria</taxon>
        <taxon>Pseudomonadati</taxon>
        <taxon>Pseudomonadota</taxon>
        <taxon>Alphaproteobacteria</taxon>
        <taxon>Rhodobacterales</taxon>
        <taxon>Paracoccaceae</taxon>
        <taxon>Paracoccus</taxon>
    </lineage>
</organism>
<proteinExistence type="inferred from homology"/>
<protein>
    <recommendedName>
        <fullName evidence="1">Serine hydroxymethyltransferase</fullName>
        <shortName evidence="1">SHMT</shortName>
        <shortName evidence="1">Serine methylase</shortName>
        <ecNumber evidence="1">2.1.2.1</ecNumber>
    </recommendedName>
</protein>